<accession>Q61420</accession>
<accession>A2AT44</accession>
<name>S35A1_MOUSE</name>
<gene>
    <name evidence="10" type="primary">Slc35a1</name>
</gene>
<comment type="function">
    <text evidence="1 2 4 5 6">Transports CMP-sialic acid from the cytosol into the Golgi apparatus, functioning as an antiporter that exchanges CMP-sialic acid for CMP (PubMed:10085119, PubMed:30985278, PubMed:34015330, PubMed:8755516). Binds both CMP-sialic acid and free CMP, but has higher affinity for free CMP (PubMed:30985278). Also able to exchange CMP-sialic acid for AMP and UMP (By similarity). Also mediates the transport of CDP-ribitol (By similarity) (PubMed:34015330).</text>
</comment>
<comment type="catalytic activity">
    <reaction evidence="2 4 5 6">
        <text>CMP-N-acetyl-beta-neuraminate(in) + CMP(out) = CMP-N-acetyl-beta-neuraminate(out) + CMP(in)</text>
        <dbReference type="Rhea" id="RHEA:67724"/>
        <dbReference type="ChEBI" id="CHEBI:57812"/>
        <dbReference type="ChEBI" id="CHEBI:60377"/>
    </reaction>
</comment>
<comment type="catalytic activity">
    <reaction evidence="1">
        <text>CMP-N-acetyl-beta-neuraminate(in) + AMP(out) = CMP-N-acetyl-beta-neuraminate(out) + AMP(in)</text>
        <dbReference type="Rhea" id="RHEA:74639"/>
        <dbReference type="ChEBI" id="CHEBI:57812"/>
        <dbReference type="ChEBI" id="CHEBI:456215"/>
    </reaction>
</comment>
<comment type="catalytic activity">
    <reaction evidence="5">
        <text>CDP-L-ribitol(in) + CDP(out) = CDP-L-ribitol(out) + CDP(in)</text>
        <dbReference type="Rhea" id="RHEA:71579"/>
        <dbReference type="ChEBI" id="CHEBI:57608"/>
        <dbReference type="ChEBI" id="CHEBI:58069"/>
    </reaction>
</comment>
<comment type="catalytic activity">
    <reaction evidence="1">
        <text>UMP(out) + CMP-N-acetyl-beta-neuraminate(in) = UMP(in) + CMP-N-acetyl-beta-neuraminate(out)</text>
        <dbReference type="Rhea" id="RHEA:74643"/>
        <dbReference type="ChEBI" id="CHEBI:57812"/>
        <dbReference type="ChEBI" id="CHEBI:57865"/>
    </reaction>
</comment>
<comment type="biophysicochemical properties">
    <kinetics>
        <KM evidence="4">13.2 uM for CMP-N-acetyl-beta-neuraminate</KM>
        <Vmax evidence="4">6.5 nmol/min/mol enzyme for CMP-N-acetyl-beta-neuraminate</Vmax>
    </kinetics>
</comment>
<comment type="subunit">
    <text evidence="1">Monomer.</text>
</comment>
<comment type="subcellular location">
    <subcellularLocation>
        <location evidence="2 3 6">Golgi apparatus membrane</location>
        <topology evidence="2">Multi-pass membrane protein</topology>
    </subcellularLocation>
</comment>
<comment type="tissue specificity">
    <text evidence="6">Ubiquitous. Found in all the tissues examined including skeletal muscle, brain, heart, liver, kidney and spleen.</text>
</comment>
<comment type="similarity">
    <text evidence="9">Belongs to the nucleotide-sugar transporter family. SLC35A subfamily.</text>
</comment>
<keyword id="KW-0002">3D-structure</keyword>
<keyword id="KW-0050">Antiport</keyword>
<keyword id="KW-0333">Golgi apparatus</keyword>
<keyword id="KW-0472">Membrane</keyword>
<keyword id="KW-1185">Reference proteome</keyword>
<keyword id="KW-0762">Sugar transport</keyword>
<keyword id="KW-0812">Transmembrane</keyword>
<keyword id="KW-1133">Transmembrane helix</keyword>
<keyword id="KW-0813">Transport</keyword>
<organism>
    <name type="scientific">Mus musculus</name>
    <name type="common">Mouse</name>
    <dbReference type="NCBI Taxonomy" id="10090"/>
    <lineage>
        <taxon>Eukaryota</taxon>
        <taxon>Metazoa</taxon>
        <taxon>Chordata</taxon>
        <taxon>Craniata</taxon>
        <taxon>Vertebrata</taxon>
        <taxon>Euteleostomi</taxon>
        <taxon>Mammalia</taxon>
        <taxon>Eutheria</taxon>
        <taxon>Euarchontoglires</taxon>
        <taxon>Glires</taxon>
        <taxon>Rodentia</taxon>
        <taxon>Myomorpha</taxon>
        <taxon>Muroidea</taxon>
        <taxon>Muridae</taxon>
        <taxon>Murinae</taxon>
        <taxon>Mus</taxon>
        <taxon>Mus</taxon>
    </lineage>
</organism>
<dbReference type="EMBL" id="Z71268">
    <property type="protein sequence ID" value="CAA95855.1"/>
    <property type="molecule type" value="mRNA"/>
</dbReference>
<dbReference type="EMBL" id="AL928738">
    <property type="status" value="NOT_ANNOTATED_CDS"/>
    <property type="molecule type" value="Genomic_DNA"/>
</dbReference>
<dbReference type="EMBL" id="BC012252">
    <property type="protein sequence ID" value="AAH12252.1"/>
    <property type="molecule type" value="mRNA"/>
</dbReference>
<dbReference type="CCDS" id="CCDS18030.1"/>
<dbReference type="RefSeq" id="NP_036025.2">
    <property type="nucleotide sequence ID" value="NM_011895.4"/>
</dbReference>
<dbReference type="PDB" id="6OH2">
    <property type="method" value="X-ray"/>
    <property type="resolution" value="2.58 A"/>
    <property type="chains" value="A=1-322"/>
</dbReference>
<dbReference type="PDB" id="6OH3">
    <property type="method" value="X-ray"/>
    <property type="resolution" value="2.75 A"/>
    <property type="chains" value="A=1-322"/>
</dbReference>
<dbReference type="PDB" id="6OH4">
    <property type="method" value="X-ray"/>
    <property type="resolution" value="3.38 A"/>
    <property type="chains" value="A/B=1-336"/>
</dbReference>
<dbReference type="PDB" id="6XBO">
    <property type="method" value="X-ray"/>
    <property type="resolution" value="1.80 A"/>
    <property type="chains" value="A=1-322"/>
</dbReference>
<dbReference type="PDBsum" id="6OH2"/>
<dbReference type="PDBsum" id="6OH3"/>
<dbReference type="PDBsum" id="6OH4"/>
<dbReference type="PDBsum" id="6XBO"/>
<dbReference type="SMR" id="Q61420"/>
<dbReference type="BioGRID" id="204873">
    <property type="interactions" value="1"/>
</dbReference>
<dbReference type="FunCoup" id="Q61420">
    <property type="interactions" value="806"/>
</dbReference>
<dbReference type="STRING" id="10090.ENSMUSP00000029970"/>
<dbReference type="TCDB" id="2.A.7.12.1">
    <property type="family name" value="the drug/metabolite transporter (dmt) superfamily"/>
</dbReference>
<dbReference type="iPTMnet" id="Q61420"/>
<dbReference type="PhosphoSitePlus" id="Q61420"/>
<dbReference type="PaxDb" id="10090-ENSMUSP00000029970"/>
<dbReference type="ProteomicsDB" id="260771"/>
<dbReference type="Pumba" id="Q61420"/>
<dbReference type="Antibodypedia" id="46448">
    <property type="antibodies" value="27 antibodies from 13 providers"/>
</dbReference>
<dbReference type="DNASU" id="24060"/>
<dbReference type="Ensembl" id="ENSMUST00000029970.14">
    <property type="protein sequence ID" value="ENSMUSP00000029970.8"/>
    <property type="gene ID" value="ENSMUSG00000028293.15"/>
</dbReference>
<dbReference type="GeneID" id="24060"/>
<dbReference type="KEGG" id="mmu:24060"/>
<dbReference type="UCSC" id="uc012dbo.1">
    <property type="organism name" value="mouse"/>
</dbReference>
<dbReference type="AGR" id="MGI:1345622"/>
<dbReference type="CTD" id="10559"/>
<dbReference type="MGI" id="MGI:1345622">
    <property type="gene designation" value="Slc35a1"/>
</dbReference>
<dbReference type="VEuPathDB" id="HostDB:ENSMUSG00000028293"/>
<dbReference type="eggNOG" id="KOG2234">
    <property type="taxonomic scope" value="Eukaryota"/>
</dbReference>
<dbReference type="GeneTree" id="ENSGT00950000182827"/>
<dbReference type="HOGENOM" id="CLU_024645_1_0_1"/>
<dbReference type="InParanoid" id="Q61420"/>
<dbReference type="OMA" id="KCYVIAS"/>
<dbReference type="OrthoDB" id="408493at2759"/>
<dbReference type="PhylomeDB" id="Q61420"/>
<dbReference type="TreeFam" id="TF315345"/>
<dbReference type="Reactome" id="R-MMU-4085001">
    <property type="pathway name" value="Sialic acid metabolism"/>
</dbReference>
<dbReference type="Reactome" id="R-MMU-727802">
    <property type="pathway name" value="Transport of nucleotide sugars"/>
</dbReference>
<dbReference type="BioGRID-ORCS" id="24060">
    <property type="hits" value="27 hits in 83 CRISPR screens"/>
</dbReference>
<dbReference type="ChiTaRS" id="Slc35a1">
    <property type="organism name" value="mouse"/>
</dbReference>
<dbReference type="PRO" id="PR:Q61420"/>
<dbReference type="Proteomes" id="UP000000589">
    <property type="component" value="Chromosome 4"/>
</dbReference>
<dbReference type="RNAct" id="Q61420">
    <property type="molecule type" value="protein"/>
</dbReference>
<dbReference type="Bgee" id="ENSMUSG00000028293">
    <property type="expression patterns" value="Expressed in conjunctival fornix and 255 other cell types or tissues"/>
</dbReference>
<dbReference type="ExpressionAtlas" id="Q61420">
    <property type="expression patterns" value="baseline and differential"/>
</dbReference>
<dbReference type="GO" id="GO:0000139">
    <property type="term" value="C:Golgi membrane"/>
    <property type="evidence" value="ECO:0000314"/>
    <property type="project" value="UniProtKB"/>
</dbReference>
<dbReference type="GO" id="GO:0016020">
    <property type="term" value="C:membrane"/>
    <property type="evidence" value="ECO:0000314"/>
    <property type="project" value="UniProtKB"/>
</dbReference>
<dbReference type="GO" id="GO:0015297">
    <property type="term" value="F:antiporter activity"/>
    <property type="evidence" value="ECO:0000314"/>
    <property type="project" value="UniProtKB"/>
</dbReference>
<dbReference type="GO" id="GO:0005456">
    <property type="term" value="F:CMP-N-acetylneuraminate transmembrane transporter activity"/>
    <property type="evidence" value="ECO:0000314"/>
    <property type="project" value="UniProtKB"/>
</dbReference>
<dbReference type="GO" id="GO:0006055">
    <property type="term" value="P:CMP-N-acetylneuraminate biosynthetic process"/>
    <property type="evidence" value="ECO:0000315"/>
    <property type="project" value="MGI"/>
</dbReference>
<dbReference type="GO" id="GO:0015782">
    <property type="term" value="P:CMP-N-acetylneuraminate transmembrane transport"/>
    <property type="evidence" value="ECO:0000314"/>
    <property type="project" value="UniProtKB"/>
</dbReference>
<dbReference type="GO" id="GO:0006054">
    <property type="term" value="P:N-acetylneuraminate metabolic process"/>
    <property type="evidence" value="ECO:0000315"/>
    <property type="project" value="MGI"/>
</dbReference>
<dbReference type="InterPro" id="IPR007271">
    <property type="entry name" value="Nuc_sug_transpt"/>
</dbReference>
<dbReference type="NCBIfam" id="TIGR00803">
    <property type="entry name" value="nst"/>
    <property type="match status" value="1"/>
</dbReference>
<dbReference type="PANTHER" id="PTHR10231">
    <property type="entry name" value="NUCLEOTIDE-SUGAR TRANSMEMBRANE TRANSPORTER"/>
    <property type="match status" value="1"/>
</dbReference>
<dbReference type="Pfam" id="PF04142">
    <property type="entry name" value="Nuc_sug_transp"/>
    <property type="match status" value="1"/>
</dbReference>
<dbReference type="PIRSF" id="PIRSF005799">
    <property type="entry name" value="UDP-gal_transpt"/>
    <property type="match status" value="1"/>
</dbReference>
<dbReference type="SUPFAM" id="SSF103481">
    <property type="entry name" value="Multidrug resistance efflux transporter EmrE"/>
    <property type="match status" value="1"/>
</dbReference>
<evidence type="ECO:0000250" key="1">
    <source>
        <dbReference type="UniProtKB" id="P78382"/>
    </source>
</evidence>
<evidence type="ECO:0000269" key="2">
    <source>
    </source>
</evidence>
<evidence type="ECO:0000269" key="3">
    <source>
    </source>
</evidence>
<evidence type="ECO:0000269" key="4">
    <source>
    </source>
</evidence>
<evidence type="ECO:0000269" key="5">
    <source>
    </source>
</evidence>
<evidence type="ECO:0000269" key="6">
    <source>
    </source>
</evidence>
<evidence type="ECO:0000303" key="7">
    <source>
    </source>
</evidence>
<evidence type="ECO:0000303" key="8">
    <source>
    </source>
</evidence>
<evidence type="ECO:0000305" key="9"/>
<evidence type="ECO:0000312" key="10">
    <source>
        <dbReference type="MGI" id="MGI:1345622"/>
    </source>
</evidence>
<evidence type="ECO:0007744" key="11">
    <source>
        <dbReference type="PDB" id="6OH2"/>
    </source>
</evidence>
<evidence type="ECO:0007744" key="12">
    <source>
        <dbReference type="PDB" id="6OH3"/>
    </source>
</evidence>
<evidence type="ECO:0007829" key="13">
    <source>
        <dbReference type="PDB" id="6XBO"/>
    </source>
</evidence>
<proteinExistence type="evidence at protein level"/>
<protein>
    <recommendedName>
        <fullName evidence="8">CMP-sialic acid transporter</fullName>
        <shortName evidence="8">CMP-SA-Tr</shortName>
        <shortName>CMP-Sia-Tr</shortName>
        <shortName evidence="7">CST</shortName>
    </recommendedName>
    <alternativeName>
        <fullName>Solute carrier family 35 member A1</fullName>
    </alternativeName>
</protein>
<feature type="chain" id="PRO_0000213352" description="CMP-sialic acid transporter">
    <location>
        <begin position="1"/>
        <end position="336"/>
    </location>
</feature>
<feature type="topological domain" description="Cytoplasmic" evidence="2 4">
    <location>
        <begin position="1"/>
        <end position="9"/>
    </location>
</feature>
<feature type="transmembrane region" description="Helical" evidence="4">
    <location>
        <begin position="10"/>
        <end position="30"/>
    </location>
</feature>
<feature type="topological domain" description="Lumenal" evidence="4">
    <location>
        <begin position="31"/>
        <end position="45"/>
    </location>
</feature>
<feature type="transmembrane region" description="Helical" evidence="4">
    <location>
        <begin position="46"/>
        <end position="64"/>
    </location>
</feature>
<feature type="topological domain" description="Cytoplasmic" evidence="4">
    <location>
        <begin position="65"/>
        <end position="87"/>
    </location>
</feature>
<feature type="transmembrane region" description="Helical" evidence="4">
    <location>
        <begin position="88"/>
        <end position="108"/>
    </location>
</feature>
<feature type="topological domain" description="Lumenal" evidence="4">
    <location>
        <begin position="109"/>
        <end position="114"/>
    </location>
</feature>
<feature type="transmembrane region" description="Helical" evidence="4">
    <location>
        <begin position="115"/>
        <end position="135"/>
    </location>
</feature>
<feature type="topological domain" description="Cytoplasmic" evidence="4">
    <location>
        <begin position="136"/>
        <end position="141"/>
    </location>
</feature>
<feature type="transmembrane region" description="Helical" evidence="4">
    <location>
        <begin position="142"/>
        <end position="160"/>
    </location>
</feature>
<feature type="topological domain" description="Lumenal" evidence="4">
    <location>
        <begin position="161"/>
        <end position="175"/>
    </location>
</feature>
<feature type="transmembrane region" description="Helical" evidence="4">
    <location>
        <begin position="176"/>
        <end position="196"/>
    </location>
</feature>
<feature type="topological domain" description="Cytoplasmic" evidence="4">
    <location>
        <begin position="197"/>
        <end position="209"/>
    </location>
</feature>
<feature type="transmembrane region" description="Helical" evidence="4">
    <location>
        <begin position="210"/>
        <end position="228"/>
    </location>
</feature>
<feature type="topological domain" description="Lumenal" evidence="4">
    <location>
        <begin position="229"/>
        <end position="243"/>
    </location>
</feature>
<feature type="transmembrane region" description="Helical" evidence="4">
    <location>
        <begin position="244"/>
        <end position="262"/>
    </location>
</feature>
<feature type="topological domain" description="Cytoplasmic" evidence="4">
    <location>
        <begin position="263"/>
        <end position="269"/>
    </location>
</feature>
<feature type="transmembrane region" description="Helical" evidence="4">
    <location>
        <begin position="270"/>
        <end position="288"/>
    </location>
</feature>
<feature type="topological domain" description="Lumenal" evidence="4">
    <location>
        <begin position="289"/>
        <end position="296"/>
    </location>
</feature>
<feature type="transmembrane region" description="Helical" evidence="4">
    <location>
        <begin position="297"/>
        <end position="315"/>
    </location>
</feature>
<feature type="topological domain" description="Cytoplasmic" evidence="2 4">
    <location>
        <begin position="316"/>
        <end position="336"/>
    </location>
</feature>
<feature type="region of interest" description="Disordered" evidence="4">
    <location>
        <begin position="316"/>
        <end position="336"/>
    </location>
</feature>
<feature type="binding site" evidence="4 11 12">
    <location>
        <position position="55"/>
    </location>
    <ligand>
        <name>CMP-N-acetyl-beta-neuraminate</name>
        <dbReference type="ChEBI" id="CHEBI:57812"/>
    </ligand>
</feature>
<feature type="binding site" evidence="4 11 12">
    <location>
        <begin position="101"/>
        <end position="102"/>
    </location>
    <ligand>
        <name>CMP-N-acetyl-beta-neuraminate</name>
        <dbReference type="ChEBI" id="CHEBI:57812"/>
    </ligand>
</feature>
<feature type="binding site" evidence="4 11 12">
    <location>
        <begin position="117"/>
        <end position="124"/>
    </location>
    <ligand>
        <name>CMP-N-acetyl-beta-neuraminate</name>
        <dbReference type="ChEBI" id="CHEBI:57812"/>
    </ligand>
</feature>
<feature type="binding site" evidence="4 11 12">
    <location>
        <position position="188"/>
    </location>
    <ligand>
        <name>CMP-N-acetyl-beta-neuraminate</name>
        <dbReference type="ChEBI" id="CHEBI:57812"/>
    </ligand>
</feature>
<feature type="binding site" evidence="4 11 12">
    <location>
        <begin position="210"/>
        <end position="214"/>
    </location>
    <ligand>
        <name>CMP-N-acetyl-beta-neuraminate</name>
        <dbReference type="ChEBI" id="CHEBI:57812"/>
    </ligand>
</feature>
<feature type="binding site" evidence="4 11 12">
    <location>
        <position position="272"/>
    </location>
    <ligand>
        <name>CMP-N-acetyl-beta-neuraminate</name>
        <dbReference type="ChEBI" id="CHEBI:57812"/>
    </ligand>
</feature>
<feature type="mutagenesis site" description="No effect on CDP-ribitol and CMP-sialic acid transport activity." evidence="5">
    <original>M</original>
    <variation>S</variation>
    <location>
        <position position="20"/>
    </location>
</feature>
<feature type="mutagenesis site" description="Loss of CMP-sialic acid transport activity but no effect on CDP-ribitol transport activity." evidence="5">
    <original>A</original>
    <variation>Y</variation>
    <location>
        <position position="24"/>
    </location>
</feature>
<feature type="mutagenesis site" description="No effect on CDP-ribitol and CMP-sialic acid transport activity." evidence="5">
    <original>Y</original>
    <variation>H</variation>
    <location>
        <position position="27"/>
    </location>
</feature>
<feature type="mutagenesis site" description="No effect on CDP-ribitol and CMP-sialic acid transport activity." evidence="5">
    <original>A</original>
    <variation>V</variation>
    <location>
        <position position="105"/>
    </location>
</feature>
<feature type="mutagenesis site" description="No effect on CDP-ribitol and CMP-sialic acid transport activity." evidence="5">
    <original>Q</original>
    <variation>A</variation>
    <location>
        <position position="118"/>
    </location>
</feature>
<feature type="mutagenesis site" description="No effect on CDP-ribitol and CMP-sialic acid transport activity." evidence="5">
    <original>Y</original>
    <variation>S</variation>
    <location>
        <position position="121"/>
    </location>
</feature>
<feature type="mutagenesis site" description="No effect on CDP-ribitol and CMP-sialic acid transport activity." evidence="5">
    <original>Q</original>
    <variation>A</variation>
    <location>
        <position position="122"/>
    </location>
</feature>
<feature type="mutagenesis site" description="Loss of CMP-sialic acid transport activity but no effect on CDP-ribitol transport activity." evidence="5">
    <original>A</original>
    <variation>Y</variation>
    <location>
        <position position="184"/>
    </location>
</feature>
<feature type="mutagenesis site" description="No effect on CDP-ribitol and CMP-sialic acid transport activity." evidence="5">
    <original>A</original>
    <variation>Q</variation>
    <location>
        <position position="253"/>
    </location>
</feature>
<feature type="mutagenesis site" description="Loss of CMP-sialic acid transport activity but no effect on CDP-ribitol transport activity." evidence="5">
    <original>G</original>
    <variation>N</variation>
    <location>
        <position position="256"/>
    </location>
</feature>
<feature type="mutagenesis site" description="No effect on CDP-ribitol and CMP-sialic acid transport activity." evidence="5">
    <original>T</original>
    <variation>M</variation>
    <location>
        <position position="260"/>
    </location>
</feature>
<feature type="mutagenesis site" description="No effect on CMP-sialic acid transport activity." evidence="4">
    <location>
        <begin position="322"/>
        <end position="336"/>
    </location>
</feature>
<feature type="mutagenesis site" description="Results in localization to the endoplasmic reticulum." evidence="3">
    <original>V</original>
    <variation>VGSKVKGS</variation>
    <location>
        <position position="336"/>
    </location>
</feature>
<feature type="sequence conflict" description="In Ref. 1; CAA95855 and 3; AAH12252." evidence="9" ref="1 3">
    <original>T</original>
    <variation>A</variation>
    <location>
        <position position="18"/>
    </location>
</feature>
<feature type="sequence conflict" description="In Ref. 1; CAA95855 and 3; AAH12252." evidence="9" ref="1 3">
    <original>T</original>
    <variation>S</variation>
    <location>
        <position position="166"/>
    </location>
</feature>
<feature type="helix" evidence="13">
    <location>
        <begin position="10"/>
        <end position="36"/>
    </location>
</feature>
<feature type="helix" evidence="13">
    <location>
        <begin position="44"/>
        <end position="67"/>
    </location>
</feature>
<feature type="helix" evidence="13">
    <location>
        <begin position="70"/>
        <end position="80"/>
    </location>
</feature>
<feature type="turn" evidence="13">
    <location>
        <begin position="81"/>
        <end position="83"/>
    </location>
</feature>
<feature type="helix" evidence="13">
    <location>
        <begin position="85"/>
        <end position="111"/>
    </location>
</feature>
<feature type="helix" evidence="13">
    <location>
        <begin position="114"/>
        <end position="121"/>
    </location>
</feature>
<feature type="helix" evidence="13">
    <location>
        <begin position="124"/>
        <end position="135"/>
    </location>
</feature>
<feature type="helix" evidence="13">
    <location>
        <begin position="142"/>
        <end position="159"/>
    </location>
</feature>
<feature type="helix" evidence="13">
    <location>
        <begin position="174"/>
        <end position="199"/>
    </location>
</feature>
<feature type="helix" evidence="13">
    <location>
        <begin position="206"/>
        <end position="236"/>
    </location>
</feature>
<feature type="turn" evidence="13">
    <location>
        <begin position="238"/>
        <end position="241"/>
    </location>
</feature>
<feature type="helix" evidence="13">
    <location>
        <begin position="244"/>
        <end position="266"/>
    </location>
</feature>
<feature type="helix" evidence="13">
    <location>
        <begin position="269"/>
        <end position="291"/>
    </location>
</feature>
<feature type="helix" evidence="13">
    <location>
        <begin position="297"/>
        <end position="313"/>
    </location>
</feature>
<reference key="1">
    <citation type="journal article" date="1996" name="Proc. Natl. Acad. Sci. U.S.A.">
        <title>Expression cloning of the Golgi CMP-sialic acid transporter.</title>
        <authorList>
            <person name="Eckhardt M."/>
            <person name="Muehlenhoff M."/>
            <person name="Bethe A."/>
            <person name="Gerardy-Schahn R."/>
        </authorList>
    </citation>
    <scope>NUCLEOTIDE SEQUENCE [MRNA]</scope>
    <scope>FUNCTION</scope>
    <scope>SUBCELLULAR LOCATION</scope>
    <scope>TISSUE SPECIFICITY</scope>
    <scope>TRANSPORTER ACTIVITY</scope>
</reference>
<reference key="2">
    <citation type="journal article" date="2009" name="PLoS Biol.">
        <title>Lineage-specific biology revealed by a finished genome assembly of the mouse.</title>
        <authorList>
            <person name="Church D.M."/>
            <person name="Goodstadt L."/>
            <person name="Hillier L.W."/>
            <person name="Zody M.C."/>
            <person name="Goldstein S."/>
            <person name="She X."/>
            <person name="Bult C.J."/>
            <person name="Agarwala R."/>
            <person name="Cherry J.L."/>
            <person name="DiCuccio M."/>
            <person name="Hlavina W."/>
            <person name="Kapustin Y."/>
            <person name="Meric P."/>
            <person name="Maglott D."/>
            <person name="Birtle Z."/>
            <person name="Marques A.C."/>
            <person name="Graves T."/>
            <person name="Zhou S."/>
            <person name="Teague B."/>
            <person name="Potamousis K."/>
            <person name="Churas C."/>
            <person name="Place M."/>
            <person name="Herschleb J."/>
            <person name="Runnheim R."/>
            <person name="Forrest D."/>
            <person name="Amos-Landgraf J."/>
            <person name="Schwartz D.C."/>
            <person name="Cheng Z."/>
            <person name="Lindblad-Toh K."/>
            <person name="Eichler E.E."/>
            <person name="Ponting C.P."/>
        </authorList>
    </citation>
    <scope>NUCLEOTIDE SEQUENCE [LARGE SCALE GENOMIC DNA]</scope>
    <source>
        <strain>C57BL/6J</strain>
    </source>
</reference>
<reference key="3">
    <citation type="journal article" date="2004" name="Genome Res.">
        <title>The status, quality, and expansion of the NIH full-length cDNA project: the Mammalian Gene Collection (MGC).</title>
        <authorList>
            <consortium name="The MGC Project Team"/>
        </authorList>
    </citation>
    <scope>NUCLEOTIDE SEQUENCE [LARGE SCALE MRNA]</scope>
    <source>
        <strain>FVB/N</strain>
        <tissue>Salivary gland</tissue>
    </source>
</reference>
<reference key="4">
    <citation type="journal article" date="1999" name="J. Biol. Chem.">
        <title>Membrane topology of the mammalian CMP-sialic acid transporter.</title>
        <authorList>
            <person name="Eckhardt M."/>
            <person name="Gotza B."/>
            <person name="Gerardy-Schahn R."/>
        </authorList>
    </citation>
    <scope>FUNCTION</scope>
    <scope>SUBCELLULAR LOCATION</scope>
    <scope>MEMBRANE TOPOLOGY</scope>
    <scope>TRANSPORTER ACTIVITY</scope>
</reference>
<reference key="5">
    <citation type="journal article" date="2010" name="Cell">
        <title>A tissue-specific atlas of mouse protein phosphorylation and expression.</title>
        <authorList>
            <person name="Huttlin E.L."/>
            <person name="Jedrychowski M.P."/>
            <person name="Elias J.E."/>
            <person name="Goswami T."/>
            <person name="Rad R."/>
            <person name="Beausoleil S.A."/>
            <person name="Villen J."/>
            <person name="Haas W."/>
            <person name="Sowa M.E."/>
            <person name="Gygi S.P."/>
        </authorList>
    </citation>
    <scope>IDENTIFICATION BY MASS SPECTROMETRY [LARGE SCALE ANALYSIS]</scope>
    <source>
        <tissue>Kidney</tissue>
        <tissue>Pancreas</tissue>
    </source>
</reference>
<reference key="6">
    <citation type="journal article" date="2021" name="J. Biol. Chem.">
        <title>The promiscuous binding pocket of SLC35A1 ensures redundant transport of CDP-ribitol to the Golgi.</title>
        <authorList>
            <person name="Ury B."/>
            <person name="Potelle S."/>
            <person name="Caligiore F."/>
            <person name="Whorton M.R."/>
            <person name="Bommer G.T."/>
        </authorList>
    </citation>
    <scope>FUNCTION</scope>
    <scope>TRANSPORTER ACTIVITY</scope>
    <scope>MUTAGENESIS OF MET-20; ALA-24; TYR-27; ALA-105; GLN-118; TYR-121; GLN-122; ALA-184; ALA-253; GLY-256 AND THR-260</scope>
</reference>
<reference key="7">
    <citation type="journal article" date="2005" name="Glycobiology">
        <title>Endoplasmic reticulum retention of the large splice variant of the UDP-galactose transporter is caused by a dilysine motif.</title>
        <authorList>
            <person name="Kabuss R."/>
            <person name="Ashikov A."/>
            <person name="Oelmann S."/>
            <person name="Gerardy-Schahn R."/>
            <person name="Bakker H."/>
        </authorList>
    </citation>
    <scope>SUBCELLULAR LOCATION</scope>
    <scope>MUTAGENESIS OF VAL-336</scope>
</reference>
<reference key="8">
    <citation type="journal article" date="2019" name="Elife">
        <title>Structural basis for mammalian nucleotide sugar transport.</title>
        <authorList>
            <person name="Ahuja S."/>
            <person name="Whorton M.R."/>
        </authorList>
    </citation>
    <scope>X-RAY CRYSTALLOGRAPHY (2.58 ANGSTROMS) OF 1-322 IN COMPLEX WITH CMP-SIALIC ACID</scope>
    <scope>FUNCTION</scope>
    <scope>TOPOLOGY</scope>
    <scope>MUTAGENESIS OF 322-SER--VAL-336</scope>
    <scope>TRANSPORTER ACTIVITY</scope>
    <scope>BIOPHYSICOCHEMICAL PROPERTIES</scope>
</reference>
<sequence>MAPARENVSLFFKLYCLTVMTLVAAAYTVALRYTRTTAEELYFSTTAVCITEVIKLLISVGLLAKETGSLGRFKASLSENVLGSPKELAKLSVPSLVYAVQNNMAFLALSNLDAAVYQVTYQLKIPCTALCTVLMLNRTLSKLQWISVFMLCGGVTLVQWKPAQATKVVVAQNPLLGFGAIAIAVLCSGFAGVYFEKVLKSSDTSLWVRNIQMYLSGIVVTLAGTYLSDGAEIQEKGFFYGYTYYVWFVIFLASVGGLYTSVVVKYTDNIMKGFSAAAAIVLSTIASVLLFGLQITLSFALGALLVCVSIYLYGLPRQDTTSIQQEATSKERIIGV</sequence>